<protein>
    <recommendedName>
        <fullName evidence="1">Polyribonucleotide nucleotidyltransferase</fullName>
        <ecNumber evidence="1">2.7.7.8</ecNumber>
    </recommendedName>
    <alternativeName>
        <fullName evidence="1">Polynucleotide phosphorylase</fullName>
        <shortName evidence="1">PNPase</shortName>
    </alternativeName>
</protein>
<sequence length="697" mass="75244">MSMFNIVRKEFQFGQHQVVLETGRVARQANTVLITMGGVTVLVAVVAAPTAKAGQDFFPLTVNYQEKQYAAGRIPGGYGKREGRASEAETLISRLIDRPIRPLFPEGYYNEIQVTATVVSSDKTMEADIAAMLGTSAALAIAGTPFRGPIGAARVGLINGEYVLNPNFEQMAQSDLDLVVAGTESAVLMVESEAKELSEDQMLGAVLFGHDEMQIAIQAINEFAAAAGAKPSDWVAPAHNEELRAKLKEAFEAKISEAYTIAVKQDRYAALDALHAEAVAQFVPEEDVDGIADEVDYLFEDLKYRTVRDNILSGKPRIDGRDTKTVRALDVQVGVLERAHGSALFTRGETQALVTTTLGNTRDALMVDTLAGTKTDNFMLHYNFPAYSVGETGRESGPKRREIGHGRLARRGVQAVLPAADRFPYVIRIVSDITESNGSSSMASVCGASLSLMDAGVPLKAPVAGIAMGLVKEGERFAVLSDILGDEDHLGDMDFKVAGSANGITALQMDIKIEGITEEIMEVALNQAFAGRMHILNEMNKVISRARPEISMHAPTFEVITINPDKIRDVIGKGGATIRQITEETKAAIDIEDNGTVRVFGETKAAAKAAIAKIQAITAEVEPGKIYDGKVIRIVEFGAFVNIMPGTDGLLHISQISNERIANVTDVLKEGQEVKVQVQDVDNRGRIKLTMKDIEQA</sequence>
<feature type="chain" id="PRO_1000147873" description="Polyribonucleotide nucleotidyltransferase">
    <location>
        <begin position="1"/>
        <end position="697"/>
    </location>
</feature>
<feature type="domain" description="KH" evidence="1">
    <location>
        <begin position="555"/>
        <end position="614"/>
    </location>
</feature>
<feature type="domain" description="S1 motif" evidence="1">
    <location>
        <begin position="624"/>
        <end position="692"/>
    </location>
</feature>
<feature type="binding site" evidence="1">
    <location>
        <position position="488"/>
    </location>
    <ligand>
        <name>Mg(2+)</name>
        <dbReference type="ChEBI" id="CHEBI:18420"/>
    </ligand>
</feature>
<feature type="binding site" evidence="1">
    <location>
        <position position="494"/>
    </location>
    <ligand>
        <name>Mg(2+)</name>
        <dbReference type="ChEBI" id="CHEBI:18420"/>
    </ligand>
</feature>
<name>PNP_ACIBC</name>
<evidence type="ECO:0000255" key="1">
    <source>
        <dbReference type="HAMAP-Rule" id="MF_01595"/>
    </source>
</evidence>
<organism>
    <name type="scientific">Acinetobacter baumannii (strain ACICU)</name>
    <dbReference type="NCBI Taxonomy" id="405416"/>
    <lineage>
        <taxon>Bacteria</taxon>
        <taxon>Pseudomonadati</taxon>
        <taxon>Pseudomonadota</taxon>
        <taxon>Gammaproteobacteria</taxon>
        <taxon>Moraxellales</taxon>
        <taxon>Moraxellaceae</taxon>
        <taxon>Acinetobacter</taxon>
        <taxon>Acinetobacter calcoaceticus/baumannii complex</taxon>
    </lineage>
</organism>
<comment type="function">
    <text evidence="1">Involved in mRNA degradation. Catalyzes the phosphorolysis of single-stranded polyribonucleotides processively in the 3'- to 5'-direction.</text>
</comment>
<comment type="catalytic activity">
    <reaction evidence="1">
        <text>RNA(n+1) + phosphate = RNA(n) + a ribonucleoside 5'-diphosphate</text>
        <dbReference type="Rhea" id="RHEA:22096"/>
        <dbReference type="Rhea" id="RHEA-COMP:14527"/>
        <dbReference type="Rhea" id="RHEA-COMP:17342"/>
        <dbReference type="ChEBI" id="CHEBI:43474"/>
        <dbReference type="ChEBI" id="CHEBI:57930"/>
        <dbReference type="ChEBI" id="CHEBI:140395"/>
        <dbReference type="EC" id="2.7.7.8"/>
    </reaction>
</comment>
<comment type="cofactor">
    <cofactor evidence="1">
        <name>Mg(2+)</name>
        <dbReference type="ChEBI" id="CHEBI:18420"/>
    </cofactor>
</comment>
<comment type="subunit">
    <text evidence="1">Component of the RNA degradosome, which is a multiprotein complex involved in RNA processing and mRNA degradation.</text>
</comment>
<comment type="subcellular location">
    <subcellularLocation>
        <location evidence="1">Cytoplasm</location>
    </subcellularLocation>
</comment>
<comment type="similarity">
    <text evidence="1">Belongs to the polyribonucleotide nucleotidyltransferase family.</text>
</comment>
<proteinExistence type="inferred from homology"/>
<dbReference type="EC" id="2.7.7.8" evidence="1"/>
<dbReference type="EMBL" id="CP000863">
    <property type="protein sequence ID" value="ACC55685.1"/>
    <property type="molecule type" value="Genomic_DNA"/>
</dbReference>
<dbReference type="SMR" id="B2I2Q0"/>
<dbReference type="KEGG" id="abc:ACICU_00373"/>
<dbReference type="HOGENOM" id="CLU_004217_2_2_6"/>
<dbReference type="Proteomes" id="UP000008839">
    <property type="component" value="Chromosome"/>
</dbReference>
<dbReference type="GO" id="GO:0005829">
    <property type="term" value="C:cytosol"/>
    <property type="evidence" value="ECO:0007669"/>
    <property type="project" value="TreeGrafter"/>
</dbReference>
<dbReference type="GO" id="GO:0000175">
    <property type="term" value="F:3'-5'-RNA exonuclease activity"/>
    <property type="evidence" value="ECO:0007669"/>
    <property type="project" value="TreeGrafter"/>
</dbReference>
<dbReference type="GO" id="GO:0000287">
    <property type="term" value="F:magnesium ion binding"/>
    <property type="evidence" value="ECO:0007669"/>
    <property type="project" value="UniProtKB-UniRule"/>
</dbReference>
<dbReference type="GO" id="GO:0004654">
    <property type="term" value="F:polyribonucleotide nucleotidyltransferase activity"/>
    <property type="evidence" value="ECO:0007669"/>
    <property type="project" value="UniProtKB-UniRule"/>
</dbReference>
<dbReference type="GO" id="GO:0003723">
    <property type="term" value="F:RNA binding"/>
    <property type="evidence" value="ECO:0007669"/>
    <property type="project" value="UniProtKB-UniRule"/>
</dbReference>
<dbReference type="GO" id="GO:0006402">
    <property type="term" value="P:mRNA catabolic process"/>
    <property type="evidence" value="ECO:0007669"/>
    <property type="project" value="UniProtKB-UniRule"/>
</dbReference>
<dbReference type="GO" id="GO:0006396">
    <property type="term" value="P:RNA processing"/>
    <property type="evidence" value="ECO:0007669"/>
    <property type="project" value="InterPro"/>
</dbReference>
<dbReference type="CDD" id="cd02393">
    <property type="entry name" value="KH-I_PNPase"/>
    <property type="match status" value="1"/>
</dbReference>
<dbReference type="CDD" id="cd11363">
    <property type="entry name" value="RNase_PH_PNPase_1"/>
    <property type="match status" value="1"/>
</dbReference>
<dbReference type="CDD" id="cd11364">
    <property type="entry name" value="RNase_PH_PNPase_2"/>
    <property type="match status" value="1"/>
</dbReference>
<dbReference type="CDD" id="cd04472">
    <property type="entry name" value="S1_PNPase"/>
    <property type="match status" value="1"/>
</dbReference>
<dbReference type="FunFam" id="2.40.50.140:FF:000023">
    <property type="entry name" value="Polyribonucleotide nucleotidyltransferase"/>
    <property type="match status" value="1"/>
</dbReference>
<dbReference type="FunFam" id="3.30.1370.10:FF:000001">
    <property type="entry name" value="Polyribonucleotide nucleotidyltransferase"/>
    <property type="match status" value="1"/>
</dbReference>
<dbReference type="FunFam" id="3.30.230.70:FF:000001">
    <property type="entry name" value="Polyribonucleotide nucleotidyltransferase"/>
    <property type="match status" value="1"/>
</dbReference>
<dbReference type="FunFam" id="3.30.230.70:FF:000002">
    <property type="entry name" value="Polyribonucleotide nucleotidyltransferase"/>
    <property type="match status" value="1"/>
</dbReference>
<dbReference type="Gene3D" id="3.30.230.70">
    <property type="entry name" value="GHMP Kinase, N-terminal domain"/>
    <property type="match status" value="2"/>
</dbReference>
<dbReference type="Gene3D" id="3.30.1370.10">
    <property type="entry name" value="K Homology domain, type 1"/>
    <property type="match status" value="1"/>
</dbReference>
<dbReference type="Gene3D" id="2.40.50.140">
    <property type="entry name" value="Nucleic acid-binding proteins"/>
    <property type="match status" value="1"/>
</dbReference>
<dbReference type="HAMAP" id="MF_01595">
    <property type="entry name" value="PNPase"/>
    <property type="match status" value="1"/>
</dbReference>
<dbReference type="InterPro" id="IPR001247">
    <property type="entry name" value="ExoRNase_PH_dom1"/>
</dbReference>
<dbReference type="InterPro" id="IPR015847">
    <property type="entry name" value="ExoRNase_PH_dom2"/>
</dbReference>
<dbReference type="InterPro" id="IPR036345">
    <property type="entry name" value="ExoRNase_PH_dom2_sf"/>
</dbReference>
<dbReference type="InterPro" id="IPR004087">
    <property type="entry name" value="KH_dom"/>
</dbReference>
<dbReference type="InterPro" id="IPR004088">
    <property type="entry name" value="KH_dom_type_1"/>
</dbReference>
<dbReference type="InterPro" id="IPR036612">
    <property type="entry name" value="KH_dom_type_1_sf"/>
</dbReference>
<dbReference type="InterPro" id="IPR012340">
    <property type="entry name" value="NA-bd_OB-fold"/>
</dbReference>
<dbReference type="InterPro" id="IPR012162">
    <property type="entry name" value="PNPase"/>
</dbReference>
<dbReference type="InterPro" id="IPR027408">
    <property type="entry name" value="PNPase/RNase_PH_dom_sf"/>
</dbReference>
<dbReference type="InterPro" id="IPR015848">
    <property type="entry name" value="PNPase_PH_RNA-bd_bac/org-type"/>
</dbReference>
<dbReference type="InterPro" id="IPR036456">
    <property type="entry name" value="PNPase_PH_RNA-bd_sf"/>
</dbReference>
<dbReference type="InterPro" id="IPR020568">
    <property type="entry name" value="Ribosomal_Su5_D2-typ_SF"/>
</dbReference>
<dbReference type="InterPro" id="IPR003029">
    <property type="entry name" value="S1_domain"/>
</dbReference>
<dbReference type="NCBIfam" id="TIGR03591">
    <property type="entry name" value="polynuc_phos"/>
    <property type="match status" value="1"/>
</dbReference>
<dbReference type="NCBIfam" id="NF008805">
    <property type="entry name" value="PRK11824.1"/>
    <property type="match status" value="1"/>
</dbReference>
<dbReference type="PANTHER" id="PTHR11252">
    <property type="entry name" value="POLYRIBONUCLEOTIDE NUCLEOTIDYLTRANSFERASE"/>
    <property type="match status" value="1"/>
</dbReference>
<dbReference type="PANTHER" id="PTHR11252:SF0">
    <property type="entry name" value="POLYRIBONUCLEOTIDE NUCLEOTIDYLTRANSFERASE 1, MITOCHONDRIAL"/>
    <property type="match status" value="1"/>
</dbReference>
<dbReference type="Pfam" id="PF00013">
    <property type="entry name" value="KH_1"/>
    <property type="match status" value="1"/>
</dbReference>
<dbReference type="Pfam" id="PF03726">
    <property type="entry name" value="PNPase"/>
    <property type="match status" value="1"/>
</dbReference>
<dbReference type="Pfam" id="PF01138">
    <property type="entry name" value="RNase_PH"/>
    <property type="match status" value="2"/>
</dbReference>
<dbReference type="Pfam" id="PF03725">
    <property type="entry name" value="RNase_PH_C"/>
    <property type="match status" value="2"/>
</dbReference>
<dbReference type="Pfam" id="PF00575">
    <property type="entry name" value="S1"/>
    <property type="match status" value="1"/>
</dbReference>
<dbReference type="PIRSF" id="PIRSF005499">
    <property type="entry name" value="PNPase"/>
    <property type="match status" value="1"/>
</dbReference>
<dbReference type="SMART" id="SM00322">
    <property type="entry name" value="KH"/>
    <property type="match status" value="1"/>
</dbReference>
<dbReference type="SMART" id="SM00316">
    <property type="entry name" value="S1"/>
    <property type="match status" value="1"/>
</dbReference>
<dbReference type="SUPFAM" id="SSF54791">
    <property type="entry name" value="Eukaryotic type KH-domain (KH-domain type I)"/>
    <property type="match status" value="1"/>
</dbReference>
<dbReference type="SUPFAM" id="SSF50249">
    <property type="entry name" value="Nucleic acid-binding proteins"/>
    <property type="match status" value="1"/>
</dbReference>
<dbReference type="SUPFAM" id="SSF46915">
    <property type="entry name" value="Polynucleotide phosphorylase/guanosine pentaphosphate synthase (PNPase/GPSI), domain 3"/>
    <property type="match status" value="1"/>
</dbReference>
<dbReference type="SUPFAM" id="SSF55666">
    <property type="entry name" value="Ribonuclease PH domain 2-like"/>
    <property type="match status" value="2"/>
</dbReference>
<dbReference type="SUPFAM" id="SSF54211">
    <property type="entry name" value="Ribosomal protein S5 domain 2-like"/>
    <property type="match status" value="2"/>
</dbReference>
<dbReference type="PROSITE" id="PS50084">
    <property type="entry name" value="KH_TYPE_1"/>
    <property type="match status" value="1"/>
</dbReference>
<dbReference type="PROSITE" id="PS50126">
    <property type="entry name" value="S1"/>
    <property type="match status" value="1"/>
</dbReference>
<keyword id="KW-0963">Cytoplasm</keyword>
<keyword id="KW-0460">Magnesium</keyword>
<keyword id="KW-0479">Metal-binding</keyword>
<keyword id="KW-0548">Nucleotidyltransferase</keyword>
<keyword id="KW-0694">RNA-binding</keyword>
<keyword id="KW-0808">Transferase</keyword>
<accession>B2I2Q0</accession>
<reference key="1">
    <citation type="journal article" date="2008" name="Antimicrob. Agents Chemother.">
        <title>Whole-genome pyrosequencing of an epidemic multidrug-resistant Acinetobacter baumannii strain belonging to the European clone II group.</title>
        <authorList>
            <person name="Iacono M."/>
            <person name="Villa L."/>
            <person name="Fortini D."/>
            <person name="Bordoni R."/>
            <person name="Imperi F."/>
            <person name="Bonnal R.J."/>
            <person name="Sicheritz-Ponten T."/>
            <person name="De Bellis G."/>
            <person name="Visca P."/>
            <person name="Cassone A."/>
            <person name="Carattoli A."/>
        </authorList>
    </citation>
    <scope>NUCLEOTIDE SEQUENCE [LARGE SCALE GENOMIC DNA]</scope>
    <source>
        <strain>ACICU</strain>
    </source>
</reference>
<gene>
    <name evidence="1" type="primary">pnp</name>
    <name type="ordered locus">ACICU_00373</name>
</gene>